<name>GSA_BDEBA</name>
<sequence length="426" mass="45768">MHKVTSEELFQRALKVAPGGVHSPVRSFKGLDRAPVFFKKAEGAYLTSVEDKKYIDFCQSFGPLILGHLDAEVKEEVHRMVDTAWTFGATEIYSLELAEWITSTLPFMEKLRFVSSGTEAVMSALRVARAATGRTKILKFEGCYHGHVDNLLVKAGSGLAGTAASSSAGIPAEVAAHTVVAPLDDEAKLAEVFAAQGKDIAAVIIEPLPANYGLLVQRPEFLKKVAELCEKNGSLLIFDEVISGFRVGLGGMVEKTGIRPDLVTYGKIIGGGFPVGCYGGKAELMNMVAPSGDVYQAGTLSANPIGMRAGLTTLKKMQRVDGWNVLEQRTKKFTDAIKAGFVKKGVNLEISQVASLFWIHGPTASPIRSIDHIPANQGGNFKNLFLKALDKGVYLAPNAYEVGFVSLAHSDELLEQAAQIIVDAAE</sequence>
<gene>
    <name evidence="1" type="primary">hemL</name>
    <name type="ordered locus">Bd3449</name>
</gene>
<feature type="chain" id="PRO_0000382283" description="Glutamate-1-semialdehyde 2,1-aminomutase">
    <location>
        <begin position="1"/>
        <end position="426"/>
    </location>
</feature>
<feature type="modified residue" description="N6-(pyridoxal phosphate)lysine" evidence="1">
    <location>
        <position position="267"/>
    </location>
</feature>
<protein>
    <recommendedName>
        <fullName evidence="1">Glutamate-1-semialdehyde 2,1-aminomutase</fullName>
        <shortName evidence="1">GSA</shortName>
        <ecNumber evidence="1">5.4.3.8</ecNumber>
    </recommendedName>
    <alternativeName>
        <fullName evidence="1">Glutamate-1-semialdehyde aminotransferase</fullName>
        <shortName evidence="1">GSA-AT</shortName>
    </alternativeName>
</protein>
<organism>
    <name type="scientific">Bdellovibrio bacteriovorus (strain ATCC 15356 / DSM 50701 / NCIMB 9529 / HD100)</name>
    <dbReference type="NCBI Taxonomy" id="264462"/>
    <lineage>
        <taxon>Bacteria</taxon>
        <taxon>Pseudomonadati</taxon>
        <taxon>Bdellovibrionota</taxon>
        <taxon>Bdellovibrionia</taxon>
        <taxon>Bdellovibrionales</taxon>
        <taxon>Pseudobdellovibrionaceae</taxon>
        <taxon>Bdellovibrio</taxon>
    </lineage>
</organism>
<reference key="1">
    <citation type="journal article" date="2004" name="Science">
        <title>A predator unmasked: life cycle of Bdellovibrio bacteriovorus from a genomic perspective.</title>
        <authorList>
            <person name="Rendulic S."/>
            <person name="Jagtap P."/>
            <person name="Rosinus A."/>
            <person name="Eppinger M."/>
            <person name="Baar C."/>
            <person name="Lanz C."/>
            <person name="Keller H."/>
            <person name="Lambert C."/>
            <person name="Evans K.J."/>
            <person name="Goesmann A."/>
            <person name="Meyer F."/>
            <person name="Sockett R.E."/>
            <person name="Schuster S.C."/>
        </authorList>
    </citation>
    <scope>NUCLEOTIDE SEQUENCE [LARGE SCALE GENOMIC DNA]</scope>
    <source>
        <strain>ATCC 15356 / DSM 50701 / NCIMB 9529 / HD100</strain>
    </source>
</reference>
<comment type="catalytic activity">
    <reaction evidence="1">
        <text>(S)-4-amino-5-oxopentanoate = 5-aminolevulinate</text>
        <dbReference type="Rhea" id="RHEA:14265"/>
        <dbReference type="ChEBI" id="CHEBI:57501"/>
        <dbReference type="ChEBI" id="CHEBI:356416"/>
        <dbReference type="EC" id="5.4.3.8"/>
    </reaction>
</comment>
<comment type="cofactor">
    <cofactor evidence="1">
        <name>pyridoxal 5'-phosphate</name>
        <dbReference type="ChEBI" id="CHEBI:597326"/>
    </cofactor>
</comment>
<comment type="pathway">
    <text evidence="1">Porphyrin-containing compound metabolism; protoporphyrin-IX biosynthesis; 5-aminolevulinate from L-glutamyl-tRNA(Glu): step 2/2.</text>
</comment>
<comment type="subunit">
    <text evidence="1">Homodimer.</text>
</comment>
<comment type="subcellular location">
    <subcellularLocation>
        <location evidence="1">Cytoplasm</location>
    </subcellularLocation>
</comment>
<comment type="similarity">
    <text evidence="1">Belongs to the class-III pyridoxal-phosphate-dependent aminotransferase family. HemL subfamily.</text>
</comment>
<keyword id="KW-0963">Cytoplasm</keyword>
<keyword id="KW-0413">Isomerase</keyword>
<keyword id="KW-0627">Porphyrin biosynthesis</keyword>
<keyword id="KW-0663">Pyridoxal phosphate</keyword>
<keyword id="KW-1185">Reference proteome</keyword>
<dbReference type="EC" id="5.4.3.8" evidence="1"/>
<dbReference type="EMBL" id="BX842655">
    <property type="protein sequence ID" value="CAE78243.1"/>
    <property type="molecule type" value="Genomic_DNA"/>
</dbReference>
<dbReference type="RefSeq" id="WP_011165781.1">
    <property type="nucleotide sequence ID" value="NC_005363.1"/>
</dbReference>
<dbReference type="SMR" id="Q6MHT9"/>
<dbReference type="STRING" id="264462.Bd3449"/>
<dbReference type="GeneID" id="93014260"/>
<dbReference type="KEGG" id="bba:Bd3449"/>
<dbReference type="eggNOG" id="COG0001">
    <property type="taxonomic scope" value="Bacteria"/>
</dbReference>
<dbReference type="HOGENOM" id="CLU_016922_1_5_7"/>
<dbReference type="UniPathway" id="UPA00251">
    <property type="reaction ID" value="UER00317"/>
</dbReference>
<dbReference type="Proteomes" id="UP000008080">
    <property type="component" value="Chromosome"/>
</dbReference>
<dbReference type="GO" id="GO:0005737">
    <property type="term" value="C:cytoplasm"/>
    <property type="evidence" value="ECO:0007669"/>
    <property type="project" value="UniProtKB-SubCell"/>
</dbReference>
<dbReference type="GO" id="GO:0042286">
    <property type="term" value="F:glutamate-1-semialdehyde 2,1-aminomutase activity"/>
    <property type="evidence" value="ECO:0007669"/>
    <property type="project" value="UniProtKB-UniRule"/>
</dbReference>
<dbReference type="GO" id="GO:0030170">
    <property type="term" value="F:pyridoxal phosphate binding"/>
    <property type="evidence" value="ECO:0007669"/>
    <property type="project" value="InterPro"/>
</dbReference>
<dbReference type="GO" id="GO:0008483">
    <property type="term" value="F:transaminase activity"/>
    <property type="evidence" value="ECO:0007669"/>
    <property type="project" value="InterPro"/>
</dbReference>
<dbReference type="GO" id="GO:0006782">
    <property type="term" value="P:protoporphyrinogen IX biosynthetic process"/>
    <property type="evidence" value="ECO:0007669"/>
    <property type="project" value="UniProtKB-UniRule"/>
</dbReference>
<dbReference type="CDD" id="cd00610">
    <property type="entry name" value="OAT_like"/>
    <property type="match status" value="1"/>
</dbReference>
<dbReference type="FunFam" id="3.40.640.10:FF:000021">
    <property type="entry name" value="Glutamate-1-semialdehyde 2,1-aminomutase"/>
    <property type="match status" value="1"/>
</dbReference>
<dbReference type="Gene3D" id="3.90.1150.10">
    <property type="entry name" value="Aspartate Aminotransferase, domain 1"/>
    <property type="match status" value="1"/>
</dbReference>
<dbReference type="Gene3D" id="3.40.640.10">
    <property type="entry name" value="Type I PLP-dependent aspartate aminotransferase-like (Major domain)"/>
    <property type="match status" value="1"/>
</dbReference>
<dbReference type="HAMAP" id="MF_00375">
    <property type="entry name" value="HemL_aminotrans_3"/>
    <property type="match status" value="1"/>
</dbReference>
<dbReference type="InterPro" id="IPR004639">
    <property type="entry name" value="4pyrrol_synth_GluAld_NH2Trfase"/>
</dbReference>
<dbReference type="InterPro" id="IPR005814">
    <property type="entry name" value="Aminotrans_3"/>
</dbReference>
<dbReference type="InterPro" id="IPR049704">
    <property type="entry name" value="Aminotrans_3_PPA_site"/>
</dbReference>
<dbReference type="InterPro" id="IPR015424">
    <property type="entry name" value="PyrdxlP-dep_Trfase"/>
</dbReference>
<dbReference type="InterPro" id="IPR015421">
    <property type="entry name" value="PyrdxlP-dep_Trfase_major"/>
</dbReference>
<dbReference type="InterPro" id="IPR015422">
    <property type="entry name" value="PyrdxlP-dep_Trfase_small"/>
</dbReference>
<dbReference type="NCBIfam" id="NF000818">
    <property type="entry name" value="PRK00062.1"/>
    <property type="match status" value="1"/>
</dbReference>
<dbReference type="PANTHER" id="PTHR43713">
    <property type="entry name" value="GLUTAMATE-1-SEMIALDEHYDE 2,1-AMINOMUTASE"/>
    <property type="match status" value="1"/>
</dbReference>
<dbReference type="PANTHER" id="PTHR43713:SF3">
    <property type="entry name" value="GLUTAMATE-1-SEMIALDEHYDE 2,1-AMINOMUTASE 1, CHLOROPLASTIC-RELATED"/>
    <property type="match status" value="1"/>
</dbReference>
<dbReference type="Pfam" id="PF00202">
    <property type="entry name" value="Aminotran_3"/>
    <property type="match status" value="1"/>
</dbReference>
<dbReference type="SUPFAM" id="SSF53383">
    <property type="entry name" value="PLP-dependent transferases"/>
    <property type="match status" value="1"/>
</dbReference>
<dbReference type="PROSITE" id="PS00600">
    <property type="entry name" value="AA_TRANSFER_CLASS_3"/>
    <property type="match status" value="1"/>
</dbReference>
<proteinExistence type="inferred from homology"/>
<accession>Q6MHT9</accession>
<evidence type="ECO:0000255" key="1">
    <source>
        <dbReference type="HAMAP-Rule" id="MF_00375"/>
    </source>
</evidence>